<protein>
    <recommendedName>
        <fullName evidence="1">Phosphoenolpyruvate carboxylase</fullName>
        <shortName evidence="1">PEPC</shortName>
        <shortName evidence="1">PEPCase</shortName>
        <ecNumber evidence="1">4.1.1.31</ecNumber>
    </recommendedName>
</protein>
<accession>B2TWF1</accession>
<gene>
    <name evidence="1" type="primary">ppc</name>
    <name type="ordered locus">SbBS512_E4442</name>
</gene>
<dbReference type="EC" id="4.1.1.31" evidence="1"/>
<dbReference type="EMBL" id="CP001063">
    <property type="protein sequence ID" value="ACD09594.1"/>
    <property type="molecule type" value="Genomic_DNA"/>
</dbReference>
<dbReference type="RefSeq" id="WP_001005586.1">
    <property type="nucleotide sequence ID" value="NC_010658.1"/>
</dbReference>
<dbReference type="SMR" id="B2TWF1"/>
<dbReference type="STRING" id="344609.SbBS512_E4442"/>
<dbReference type="KEGG" id="sbc:SbBS512_E4442"/>
<dbReference type="HOGENOM" id="CLU_006557_2_0_6"/>
<dbReference type="Proteomes" id="UP000001030">
    <property type="component" value="Chromosome"/>
</dbReference>
<dbReference type="GO" id="GO:0005829">
    <property type="term" value="C:cytosol"/>
    <property type="evidence" value="ECO:0007669"/>
    <property type="project" value="TreeGrafter"/>
</dbReference>
<dbReference type="GO" id="GO:0000287">
    <property type="term" value="F:magnesium ion binding"/>
    <property type="evidence" value="ECO:0007669"/>
    <property type="project" value="UniProtKB-UniRule"/>
</dbReference>
<dbReference type="GO" id="GO:0008964">
    <property type="term" value="F:phosphoenolpyruvate carboxylase activity"/>
    <property type="evidence" value="ECO:0007669"/>
    <property type="project" value="UniProtKB-UniRule"/>
</dbReference>
<dbReference type="GO" id="GO:0015977">
    <property type="term" value="P:carbon fixation"/>
    <property type="evidence" value="ECO:0007669"/>
    <property type="project" value="UniProtKB-UniRule"/>
</dbReference>
<dbReference type="GO" id="GO:0006107">
    <property type="term" value="P:oxaloacetate metabolic process"/>
    <property type="evidence" value="ECO:0007669"/>
    <property type="project" value="UniProtKB-UniRule"/>
</dbReference>
<dbReference type="GO" id="GO:0006099">
    <property type="term" value="P:tricarboxylic acid cycle"/>
    <property type="evidence" value="ECO:0007669"/>
    <property type="project" value="InterPro"/>
</dbReference>
<dbReference type="FunFam" id="1.20.1440.90:FF:000002">
    <property type="entry name" value="Phosphoenolpyruvate carboxylase"/>
    <property type="match status" value="1"/>
</dbReference>
<dbReference type="Gene3D" id="1.20.1440.90">
    <property type="entry name" value="Phosphoenolpyruvate/pyruvate domain"/>
    <property type="match status" value="1"/>
</dbReference>
<dbReference type="HAMAP" id="MF_00595">
    <property type="entry name" value="PEPcase_type1"/>
    <property type="match status" value="1"/>
</dbReference>
<dbReference type="InterPro" id="IPR021135">
    <property type="entry name" value="PEP_COase"/>
</dbReference>
<dbReference type="InterPro" id="IPR022805">
    <property type="entry name" value="PEP_COase_bac/pln-type"/>
</dbReference>
<dbReference type="InterPro" id="IPR018129">
    <property type="entry name" value="PEP_COase_Lys_AS"/>
</dbReference>
<dbReference type="InterPro" id="IPR033129">
    <property type="entry name" value="PEPCASE_His_AS"/>
</dbReference>
<dbReference type="InterPro" id="IPR015813">
    <property type="entry name" value="Pyrv/PenolPyrv_kinase-like_dom"/>
</dbReference>
<dbReference type="NCBIfam" id="NF000584">
    <property type="entry name" value="PRK00009.1"/>
    <property type="match status" value="1"/>
</dbReference>
<dbReference type="PANTHER" id="PTHR30523">
    <property type="entry name" value="PHOSPHOENOLPYRUVATE CARBOXYLASE"/>
    <property type="match status" value="1"/>
</dbReference>
<dbReference type="PANTHER" id="PTHR30523:SF6">
    <property type="entry name" value="PHOSPHOENOLPYRUVATE CARBOXYLASE"/>
    <property type="match status" value="1"/>
</dbReference>
<dbReference type="Pfam" id="PF00311">
    <property type="entry name" value="PEPcase"/>
    <property type="match status" value="1"/>
</dbReference>
<dbReference type="PRINTS" id="PR00150">
    <property type="entry name" value="PEPCARBXLASE"/>
</dbReference>
<dbReference type="SUPFAM" id="SSF51621">
    <property type="entry name" value="Phosphoenolpyruvate/pyruvate domain"/>
    <property type="match status" value="1"/>
</dbReference>
<dbReference type="PROSITE" id="PS00781">
    <property type="entry name" value="PEPCASE_1"/>
    <property type="match status" value="1"/>
</dbReference>
<dbReference type="PROSITE" id="PS00393">
    <property type="entry name" value="PEPCASE_2"/>
    <property type="match status" value="1"/>
</dbReference>
<feature type="chain" id="PRO_1000129845" description="Phosphoenolpyruvate carboxylase">
    <location>
        <begin position="1"/>
        <end position="883"/>
    </location>
</feature>
<feature type="active site" evidence="1">
    <location>
        <position position="138"/>
    </location>
</feature>
<feature type="active site" evidence="1">
    <location>
        <position position="546"/>
    </location>
</feature>
<reference key="1">
    <citation type="submission" date="2008-05" db="EMBL/GenBank/DDBJ databases">
        <title>Complete sequence of Shigella boydii serotype 18 strain BS512.</title>
        <authorList>
            <person name="Rasko D.A."/>
            <person name="Rosovitz M."/>
            <person name="Maurelli A.T."/>
            <person name="Myers G."/>
            <person name="Seshadri R."/>
            <person name="Cer R."/>
            <person name="Jiang L."/>
            <person name="Ravel J."/>
            <person name="Sebastian Y."/>
        </authorList>
    </citation>
    <scope>NUCLEOTIDE SEQUENCE [LARGE SCALE GENOMIC DNA]</scope>
    <source>
        <strain>CDC 3083-94 / BS512</strain>
    </source>
</reference>
<organism>
    <name type="scientific">Shigella boydii serotype 18 (strain CDC 3083-94 / BS512)</name>
    <dbReference type="NCBI Taxonomy" id="344609"/>
    <lineage>
        <taxon>Bacteria</taxon>
        <taxon>Pseudomonadati</taxon>
        <taxon>Pseudomonadota</taxon>
        <taxon>Gammaproteobacteria</taxon>
        <taxon>Enterobacterales</taxon>
        <taxon>Enterobacteriaceae</taxon>
        <taxon>Shigella</taxon>
    </lineage>
</organism>
<comment type="function">
    <text evidence="1">Forms oxaloacetate, a four-carbon dicarboxylic acid source for the tricarboxylic acid cycle.</text>
</comment>
<comment type="catalytic activity">
    <reaction evidence="1">
        <text>oxaloacetate + phosphate = phosphoenolpyruvate + hydrogencarbonate</text>
        <dbReference type="Rhea" id="RHEA:28370"/>
        <dbReference type="ChEBI" id="CHEBI:16452"/>
        <dbReference type="ChEBI" id="CHEBI:17544"/>
        <dbReference type="ChEBI" id="CHEBI:43474"/>
        <dbReference type="ChEBI" id="CHEBI:58702"/>
        <dbReference type="EC" id="4.1.1.31"/>
    </reaction>
</comment>
<comment type="cofactor">
    <cofactor evidence="1">
        <name>Mg(2+)</name>
        <dbReference type="ChEBI" id="CHEBI:18420"/>
    </cofactor>
</comment>
<comment type="similarity">
    <text evidence="1">Belongs to the PEPCase type 1 family.</text>
</comment>
<name>CAPP_SHIB3</name>
<evidence type="ECO:0000255" key="1">
    <source>
        <dbReference type="HAMAP-Rule" id="MF_00595"/>
    </source>
</evidence>
<keyword id="KW-0120">Carbon dioxide fixation</keyword>
<keyword id="KW-0456">Lyase</keyword>
<keyword id="KW-0460">Magnesium</keyword>
<keyword id="KW-1185">Reference proteome</keyword>
<sequence length="883" mass="99063">MNEQYSALRSNVSMLGKVLGETIKDALGEHILERVETIRKLSKSSRAGNDANRQELLTTLQNLSNDELLPVARAFSQFLNLANTAEQYHSISPKGEAASNPEVIARTLRKLKNQPELSEDTIKKAVESLSLELVLTAHPTEITRRTLIHKMVEVNACLKQLDNKDIADYEHNQLMRRLRQLIAQSWHTDEIRKLRPSPVDEAKWGFAVVENSLWQGVPNYLRELNEQLEENLGYKLPVEFVPVRFTSWMGGDRDGNPNVTADITRHVLLLSRWKATDLFLKDIQVLVSELSMVEATPELLALVGEEGAAEPYRYLMKNLRSRLMATQAWLEARLKGEELPKPEGLLTQNEELWEPLYACYQSLQACGMGIIANGDLLDTLRRVKCFGVPLVRIDIRQESTRHTEALGELTRYLGIGDYESWSEADKQAFLIRELNSKRPLLPRNWQPSAETREVLDTCQVIAEAPQGSIAAYVISMAKTPSDVLAVHLLLKEAGIGFAMPVAPLFETLDDLNNANDVMTQLLNIDWYRGLIQGKQMVMIGYSDSAKDAGVMAASWAQYQAQDALIKTCEKAGIELTLFHGRGGSIGRGGAPAHAALLSQPPGSLKGGLRVTEQGEMIRFKYGLPEITVSSLSLYTGAILEANLLPPPEPKESWRRIMDELSVISCDVYRGYVRENKDFVPYFRSATPEQELGKLPLGSRPAKRRPTGGVESLRAIPWIFAWTQNRLMLPAWLGAGTALQKVVEDGKQSELEAMCRDWPFFSTRLGMLEMVFAKADLWLAEYYDQRLVDKALWPLGKELRNLQEEDIKVVLAIANDSHLMADLPWIAESIQLRNIYTDPLNVLQAELLHRSRQAEKEGQEPDPRVEQALMVTIAGIAAGMRNTG</sequence>
<proteinExistence type="inferred from homology"/>